<keyword id="KW-0963">Cytoplasm</keyword>
<keyword id="KW-0539">Nucleus</keyword>
<keyword id="KW-0653">Protein transport</keyword>
<keyword id="KW-1185">Reference proteome</keyword>
<keyword id="KW-0813">Transport</keyword>
<organism>
    <name type="scientific">Emericella nidulans (strain FGSC A4 / ATCC 38163 / CBS 112.46 / NRRL 194 / M139)</name>
    <name type="common">Aspergillus nidulans</name>
    <dbReference type="NCBI Taxonomy" id="227321"/>
    <lineage>
        <taxon>Eukaryota</taxon>
        <taxon>Fungi</taxon>
        <taxon>Dikarya</taxon>
        <taxon>Ascomycota</taxon>
        <taxon>Pezizomycotina</taxon>
        <taxon>Eurotiomycetes</taxon>
        <taxon>Eurotiomycetidae</taxon>
        <taxon>Eurotiales</taxon>
        <taxon>Aspergillaceae</taxon>
        <taxon>Aspergillus</taxon>
        <taxon>Aspergillus subgen. Nidulantes</taxon>
    </lineage>
</organism>
<evidence type="ECO:0000250" key="1"/>
<evidence type="ECO:0000255" key="2">
    <source>
        <dbReference type="PROSITE-ProRule" id="PRU00507"/>
    </source>
</evidence>
<evidence type="ECO:0000256" key="3">
    <source>
        <dbReference type="SAM" id="MobiDB-lite"/>
    </source>
</evidence>
<evidence type="ECO:0000305" key="4"/>
<dbReference type="EMBL" id="AACD01000110">
    <property type="protein sequence ID" value="EAA58159.1"/>
    <property type="molecule type" value="Genomic_DNA"/>
</dbReference>
<dbReference type="EMBL" id="BN001301">
    <property type="protein sequence ID" value="CBF71133.1"/>
    <property type="molecule type" value="Genomic_DNA"/>
</dbReference>
<dbReference type="RefSeq" id="XP_664234.1">
    <property type="nucleotide sequence ID" value="XM_659142.1"/>
</dbReference>
<dbReference type="SMR" id="Q5AYK0"/>
<dbReference type="FunCoup" id="Q5AYK0">
    <property type="interactions" value="551"/>
</dbReference>
<dbReference type="STRING" id="227321.Q5AYK0"/>
<dbReference type="EnsemblFungi" id="CBF71133">
    <property type="protein sequence ID" value="CBF71133"/>
    <property type="gene ID" value="ANIA_06630"/>
</dbReference>
<dbReference type="KEGG" id="ani:ANIA_06630"/>
<dbReference type="VEuPathDB" id="FungiDB:AN6630"/>
<dbReference type="eggNOG" id="KOG2239">
    <property type="taxonomic scope" value="Eukaryota"/>
</dbReference>
<dbReference type="HOGENOM" id="CLU_057806_2_0_1"/>
<dbReference type="InParanoid" id="Q5AYK0"/>
<dbReference type="OMA" id="SQKMIFA"/>
<dbReference type="OrthoDB" id="3169036at2759"/>
<dbReference type="Proteomes" id="UP000000560">
    <property type="component" value="Chromosome I"/>
</dbReference>
<dbReference type="GO" id="GO:0005737">
    <property type="term" value="C:cytoplasm"/>
    <property type="evidence" value="ECO:0000318"/>
    <property type="project" value="GO_Central"/>
</dbReference>
<dbReference type="GO" id="GO:0005854">
    <property type="term" value="C:nascent polypeptide-associated complex"/>
    <property type="evidence" value="ECO:0007669"/>
    <property type="project" value="EnsemblFungi"/>
</dbReference>
<dbReference type="GO" id="GO:0005634">
    <property type="term" value="C:nucleus"/>
    <property type="evidence" value="ECO:0007669"/>
    <property type="project" value="UniProtKB-SubCell"/>
</dbReference>
<dbReference type="GO" id="GO:0051082">
    <property type="term" value="F:unfolded protein binding"/>
    <property type="evidence" value="ECO:0000318"/>
    <property type="project" value="GO_Central"/>
</dbReference>
<dbReference type="GO" id="GO:0006612">
    <property type="term" value="P:protein targeting to membrane"/>
    <property type="evidence" value="ECO:0000318"/>
    <property type="project" value="GO_Central"/>
</dbReference>
<dbReference type="GO" id="GO:0015031">
    <property type="term" value="P:protein transport"/>
    <property type="evidence" value="ECO:0007669"/>
    <property type="project" value="UniProtKB-KW"/>
</dbReference>
<dbReference type="CDD" id="cd22054">
    <property type="entry name" value="NAC_NACA"/>
    <property type="match status" value="1"/>
</dbReference>
<dbReference type="CDD" id="cd14358">
    <property type="entry name" value="UBA_NAC_euk"/>
    <property type="match status" value="1"/>
</dbReference>
<dbReference type="FunFam" id="2.20.70.30:FF:000002">
    <property type="entry name" value="Nascent polypeptide-associated complex (NAC), alpha subunit"/>
    <property type="match status" value="1"/>
</dbReference>
<dbReference type="FunFam" id="1.10.8.10:FF:000006">
    <property type="entry name" value="Putative nascent polypeptide-associated complex subunit alpha"/>
    <property type="match status" value="1"/>
</dbReference>
<dbReference type="Gene3D" id="1.10.8.10">
    <property type="entry name" value="DNA helicase RuvA subunit, C-terminal domain"/>
    <property type="match status" value="1"/>
</dbReference>
<dbReference type="Gene3D" id="2.20.70.30">
    <property type="entry name" value="Nascent polypeptide-associated complex domain"/>
    <property type="match status" value="1"/>
</dbReference>
<dbReference type="InterPro" id="IPR016641">
    <property type="entry name" value="EGD2/NACA0like"/>
</dbReference>
<dbReference type="InterPro" id="IPR044034">
    <property type="entry name" value="NAC-like_UBA"/>
</dbReference>
<dbReference type="InterPro" id="IPR038187">
    <property type="entry name" value="NAC_A/B_dom_sf"/>
</dbReference>
<dbReference type="InterPro" id="IPR002715">
    <property type="entry name" value="Nas_poly-pep-assoc_cplx_dom"/>
</dbReference>
<dbReference type="PANTHER" id="PTHR21713">
    <property type="entry name" value="NASCENT POLYPEPTIDE ASSOCIATED COMPLEX ALPHA SUBUNIT-RELATED"/>
    <property type="match status" value="1"/>
</dbReference>
<dbReference type="Pfam" id="PF01849">
    <property type="entry name" value="NAC"/>
    <property type="match status" value="1"/>
</dbReference>
<dbReference type="Pfam" id="PF19026">
    <property type="entry name" value="UBA_HYPK"/>
    <property type="match status" value="1"/>
</dbReference>
<dbReference type="PIRSF" id="PIRSF015901">
    <property type="entry name" value="NAC_alpha"/>
    <property type="match status" value="1"/>
</dbReference>
<dbReference type="SMART" id="SM01407">
    <property type="entry name" value="NAC"/>
    <property type="match status" value="1"/>
</dbReference>
<dbReference type="PROSITE" id="PS51151">
    <property type="entry name" value="NAC_AB"/>
    <property type="match status" value="1"/>
</dbReference>
<gene>
    <name type="primary">egd2</name>
    <name type="ORF">AN6630</name>
</gene>
<comment type="function">
    <text evidence="1">Component of the nascent polypeptide-associated complex (NAC), a dynamic component of the ribosomal exit tunnel, protecting the emerging polypeptides from interaction with other cytoplasmic proteins to ensure appropriate nascent protein targeting. The NAC complex also promotes mitochondrial protein import by enhancing productive ribosome interactions with the outer mitochondrial membrane and blocks the inappropriate interaction of ribosomes translating non-secretory nascent polypeptides with translocation sites in the membrane of the endoplasmic reticulum. Egd2 may also be involved in transcription regulation (By similarity).</text>
</comment>
<comment type="subunit">
    <text evidence="1">Part of the nascent polypeptide-associated complex (NAC), consisting of egd2 and egd1. NAC associates with ribosomes via egd1 (By similarity).</text>
</comment>
<comment type="subcellular location">
    <subcellularLocation>
        <location evidence="1">Cytoplasm</location>
    </subcellularLocation>
    <subcellularLocation>
        <location evidence="1">Nucleus</location>
    </subcellularLocation>
    <text evidence="1">Predominantly cytoplasmic, may also transiently localize to the nucleus.</text>
</comment>
<comment type="similarity">
    <text evidence="4">Belongs to the NAC-alpha family.</text>
</comment>
<protein>
    <recommendedName>
        <fullName>Nascent polypeptide-associated complex subunit alpha</fullName>
        <shortName>NAC-alpha</shortName>
    </recommendedName>
    <alternativeName>
        <fullName>Alpha-NAC</fullName>
    </alternativeName>
</protein>
<name>NACA_EMENI</name>
<accession>Q5AYK0</accession>
<accession>C8V1B5</accession>
<proteinExistence type="inferred from homology"/>
<feature type="chain" id="PRO_0000273489" description="Nascent polypeptide-associated complex subunit alpha">
    <location>
        <begin position="1"/>
        <end position="203"/>
    </location>
</feature>
<feature type="domain" description="NAC-A/B" evidence="2">
    <location>
        <begin position="46"/>
        <end position="111"/>
    </location>
</feature>
<feature type="domain" description="UBA">
    <location>
        <begin position="164"/>
        <end position="203"/>
    </location>
</feature>
<feature type="region of interest" description="Disordered" evidence="3">
    <location>
        <begin position="1"/>
        <end position="45"/>
    </location>
</feature>
<feature type="region of interest" description="Disordered" evidence="3">
    <location>
        <begin position="118"/>
        <end position="167"/>
    </location>
</feature>
<feature type="compositionally biased region" description="Basic and acidic residues" evidence="3">
    <location>
        <begin position="1"/>
        <end position="19"/>
    </location>
</feature>
<feature type="compositionally biased region" description="Acidic residues" evidence="3">
    <location>
        <begin position="21"/>
        <end position="32"/>
    </location>
</feature>
<feature type="compositionally biased region" description="Basic and acidic residues" evidence="3">
    <location>
        <begin position="125"/>
        <end position="150"/>
    </location>
</feature>
<feature type="compositionally biased region" description="Acidic residues" evidence="3">
    <location>
        <begin position="151"/>
        <end position="163"/>
    </location>
</feature>
<reference key="1">
    <citation type="journal article" date="2005" name="Nature">
        <title>Sequencing of Aspergillus nidulans and comparative analysis with A. fumigatus and A. oryzae.</title>
        <authorList>
            <person name="Galagan J.E."/>
            <person name="Calvo S.E."/>
            <person name="Cuomo C."/>
            <person name="Ma L.-J."/>
            <person name="Wortman J.R."/>
            <person name="Batzoglou S."/>
            <person name="Lee S.-I."/>
            <person name="Bastuerkmen M."/>
            <person name="Spevak C.C."/>
            <person name="Clutterbuck J."/>
            <person name="Kapitonov V."/>
            <person name="Jurka J."/>
            <person name="Scazzocchio C."/>
            <person name="Farman M.L."/>
            <person name="Butler J."/>
            <person name="Purcell S."/>
            <person name="Harris S."/>
            <person name="Braus G.H."/>
            <person name="Draht O."/>
            <person name="Busch S."/>
            <person name="D'Enfert C."/>
            <person name="Bouchier C."/>
            <person name="Goldman G.H."/>
            <person name="Bell-Pedersen D."/>
            <person name="Griffiths-Jones S."/>
            <person name="Doonan J.H."/>
            <person name="Yu J."/>
            <person name="Vienken K."/>
            <person name="Pain A."/>
            <person name="Freitag M."/>
            <person name="Selker E.U."/>
            <person name="Archer D.B."/>
            <person name="Penalva M.A."/>
            <person name="Oakley B.R."/>
            <person name="Momany M."/>
            <person name="Tanaka T."/>
            <person name="Kumagai T."/>
            <person name="Asai K."/>
            <person name="Machida M."/>
            <person name="Nierman W.C."/>
            <person name="Denning D.W."/>
            <person name="Caddick M.X."/>
            <person name="Hynes M."/>
            <person name="Paoletti M."/>
            <person name="Fischer R."/>
            <person name="Miller B.L."/>
            <person name="Dyer P.S."/>
            <person name="Sachs M.S."/>
            <person name="Osmani S.A."/>
            <person name="Birren B.W."/>
        </authorList>
    </citation>
    <scope>NUCLEOTIDE SEQUENCE [LARGE SCALE GENOMIC DNA]</scope>
    <source>
        <strain>FGSC A4 / ATCC 38163 / CBS 112.46 / NRRL 194 / M139</strain>
    </source>
</reference>
<reference key="2">
    <citation type="journal article" date="2009" name="Fungal Genet. Biol.">
        <title>The 2008 update of the Aspergillus nidulans genome annotation: a community effort.</title>
        <authorList>
            <person name="Wortman J.R."/>
            <person name="Gilsenan J.M."/>
            <person name="Joardar V."/>
            <person name="Deegan J."/>
            <person name="Clutterbuck J."/>
            <person name="Andersen M.R."/>
            <person name="Archer D."/>
            <person name="Bencina M."/>
            <person name="Braus G."/>
            <person name="Coutinho P."/>
            <person name="von Dohren H."/>
            <person name="Doonan J."/>
            <person name="Driessen A.J."/>
            <person name="Durek P."/>
            <person name="Espeso E."/>
            <person name="Fekete E."/>
            <person name="Flipphi M."/>
            <person name="Estrada C.G."/>
            <person name="Geysens S."/>
            <person name="Goldman G."/>
            <person name="de Groot P.W."/>
            <person name="Hansen K."/>
            <person name="Harris S.D."/>
            <person name="Heinekamp T."/>
            <person name="Helmstaedt K."/>
            <person name="Henrissat B."/>
            <person name="Hofmann G."/>
            <person name="Homan T."/>
            <person name="Horio T."/>
            <person name="Horiuchi H."/>
            <person name="James S."/>
            <person name="Jones M."/>
            <person name="Karaffa L."/>
            <person name="Karanyi Z."/>
            <person name="Kato M."/>
            <person name="Keller N."/>
            <person name="Kelly D.E."/>
            <person name="Kiel J.A."/>
            <person name="Kim J.M."/>
            <person name="van der Klei I.J."/>
            <person name="Klis F.M."/>
            <person name="Kovalchuk A."/>
            <person name="Krasevec N."/>
            <person name="Kubicek C.P."/>
            <person name="Liu B."/>
            <person name="Maccabe A."/>
            <person name="Meyer V."/>
            <person name="Mirabito P."/>
            <person name="Miskei M."/>
            <person name="Mos M."/>
            <person name="Mullins J."/>
            <person name="Nelson D.R."/>
            <person name="Nielsen J."/>
            <person name="Oakley B.R."/>
            <person name="Osmani S.A."/>
            <person name="Pakula T."/>
            <person name="Paszewski A."/>
            <person name="Paulsen I."/>
            <person name="Pilsyk S."/>
            <person name="Pocsi I."/>
            <person name="Punt P.J."/>
            <person name="Ram A.F."/>
            <person name="Ren Q."/>
            <person name="Robellet X."/>
            <person name="Robson G."/>
            <person name="Seiboth B."/>
            <person name="van Solingen P."/>
            <person name="Specht T."/>
            <person name="Sun J."/>
            <person name="Taheri-Talesh N."/>
            <person name="Takeshita N."/>
            <person name="Ussery D."/>
            <person name="vanKuyk P.A."/>
            <person name="Visser H."/>
            <person name="van de Vondervoort P.J."/>
            <person name="de Vries R.P."/>
            <person name="Walton J."/>
            <person name="Xiang X."/>
            <person name="Xiong Y."/>
            <person name="Zeng A.P."/>
            <person name="Brandt B.W."/>
            <person name="Cornell M.J."/>
            <person name="van den Hondel C.A."/>
            <person name="Visser J."/>
            <person name="Oliver S.G."/>
            <person name="Turner G."/>
        </authorList>
    </citation>
    <scope>GENOME REANNOTATION</scope>
    <source>
        <strain>FGSC A4 / ATCC 38163 / CBS 112.46 / NRRL 194 / M139</strain>
    </source>
</reference>
<sequence length="203" mass="21972">MADPRIEELPDEEVPKTNVEDAADSSESEAGEEPTIPGGAAVTIHSRNEKKARKAIGKLGLKHVPGITRVTLRRPKNILFVINQPDVYRSPSSNTWIIFGEAKIEDLNSQAQASAAQQLAAAEAAGEHAGHDHDHDKGKGKAPETEAKKEEEEDDGEEVDETGLEPKDIDLVMAQANVSRKKAVKALRENDNDIVNSIMALSI</sequence>